<organism>
    <name type="scientific">Pisum sativum</name>
    <name type="common">Garden pea</name>
    <name type="synonym">Lathyrus oleraceus</name>
    <dbReference type="NCBI Taxonomy" id="3888"/>
    <lineage>
        <taxon>Eukaryota</taxon>
        <taxon>Viridiplantae</taxon>
        <taxon>Streptophyta</taxon>
        <taxon>Embryophyta</taxon>
        <taxon>Tracheophyta</taxon>
        <taxon>Spermatophyta</taxon>
        <taxon>Magnoliopsida</taxon>
        <taxon>eudicotyledons</taxon>
        <taxon>Gunneridae</taxon>
        <taxon>Pentapetalae</taxon>
        <taxon>rosids</taxon>
        <taxon>fabids</taxon>
        <taxon>Fabales</taxon>
        <taxon>Fabaceae</taxon>
        <taxon>Papilionoideae</taxon>
        <taxon>50 kb inversion clade</taxon>
        <taxon>NPAAA clade</taxon>
        <taxon>Hologalegina</taxon>
        <taxon>IRL clade</taxon>
        <taxon>Fabeae</taxon>
        <taxon>Pisum</taxon>
    </lineage>
</organism>
<accession>P47923</accession>
<dbReference type="EC" id="2.7.4.6"/>
<dbReference type="EMBL" id="Z37990">
    <property type="protein sequence ID" value="CAA86071.1"/>
    <property type="molecule type" value="mRNA"/>
</dbReference>
<dbReference type="PIR" id="S52785">
    <property type="entry name" value="S52785"/>
</dbReference>
<dbReference type="SMR" id="P47923"/>
<dbReference type="BRENDA" id="2.7.4.6">
    <property type="organism ID" value="4872"/>
</dbReference>
<dbReference type="GO" id="GO:0009507">
    <property type="term" value="C:chloroplast"/>
    <property type="evidence" value="ECO:0007669"/>
    <property type="project" value="UniProtKB-SubCell"/>
</dbReference>
<dbReference type="GO" id="GO:0005524">
    <property type="term" value="F:ATP binding"/>
    <property type="evidence" value="ECO:0007669"/>
    <property type="project" value="UniProtKB-KW"/>
</dbReference>
<dbReference type="GO" id="GO:0046872">
    <property type="term" value="F:metal ion binding"/>
    <property type="evidence" value="ECO:0007669"/>
    <property type="project" value="UniProtKB-KW"/>
</dbReference>
<dbReference type="GO" id="GO:0004550">
    <property type="term" value="F:nucleoside diphosphate kinase activity"/>
    <property type="evidence" value="ECO:0007669"/>
    <property type="project" value="UniProtKB-EC"/>
</dbReference>
<dbReference type="GO" id="GO:0006241">
    <property type="term" value="P:CTP biosynthetic process"/>
    <property type="evidence" value="ECO:0007669"/>
    <property type="project" value="InterPro"/>
</dbReference>
<dbReference type="GO" id="GO:0006183">
    <property type="term" value="P:GTP biosynthetic process"/>
    <property type="evidence" value="ECO:0007669"/>
    <property type="project" value="InterPro"/>
</dbReference>
<dbReference type="GO" id="GO:0006228">
    <property type="term" value="P:UTP biosynthetic process"/>
    <property type="evidence" value="ECO:0007669"/>
    <property type="project" value="InterPro"/>
</dbReference>
<dbReference type="CDD" id="cd04413">
    <property type="entry name" value="NDPk_I"/>
    <property type="match status" value="1"/>
</dbReference>
<dbReference type="FunFam" id="3.30.70.141:FF:000002">
    <property type="entry name" value="Nucleoside diphosphate kinase"/>
    <property type="match status" value="1"/>
</dbReference>
<dbReference type="Gene3D" id="3.30.70.141">
    <property type="entry name" value="Nucleoside diphosphate kinase-like domain"/>
    <property type="match status" value="1"/>
</dbReference>
<dbReference type="HAMAP" id="MF_00451">
    <property type="entry name" value="NDP_kinase"/>
    <property type="match status" value="1"/>
</dbReference>
<dbReference type="InterPro" id="IPR034907">
    <property type="entry name" value="NDK-like_dom"/>
</dbReference>
<dbReference type="InterPro" id="IPR036850">
    <property type="entry name" value="NDK-like_dom_sf"/>
</dbReference>
<dbReference type="InterPro" id="IPR001564">
    <property type="entry name" value="Nucleoside_diP_kinase"/>
</dbReference>
<dbReference type="InterPro" id="IPR023005">
    <property type="entry name" value="Nucleoside_diP_kinase_AS"/>
</dbReference>
<dbReference type="NCBIfam" id="NF001908">
    <property type="entry name" value="PRK00668.1"/>
    <property type="match status" value="1"/>
</dbReference>
<dbReference type="PANTHER" id="PTHR11349">
    <property type="entry name" value="NUCLEOSIDE DIPHOSPHATE KINASE"/>
    <property type="match status" value="1"/>
</dbReference>
<dbReference type="Pfam" id="PF00334">
    <property type="entry name" value="NDK"/>
    <property type="match status" value="1"/>
</dbReference>
<dbReference type="PRINTS" id="PR01243">
    <property type="entry name" value="NUCDPKINASE"/>
</dbReference>
<dbReference type="SMART" id="SM00562">
    <property type="entry name" value="NDK"/>
    <property type="match status" value="1"/>
</dbReference>
<dbReference type="SUPFAM" id="SSF54919">
    <property type="entry name" value="Nucleoside diphosphate kinase, NDK"/>
    <property type="match status" value="1"/>
</dbReference>
<dbReference type="PROSITE" id="PS00469">
    <property type="entry name" value="NDPK"/>
    <property type="match status" value="1"/>
</dbReference>
<dbReference type="PROSITE" id="PS51374">
    <property type="entry name" value="NDPK_LIKE"/>
    <property type="match status" value="1"/>
</dbReference>
<keyword id="KW-0067">ATP-binding</keyword>
<keyword id="KW-0150">Chloroplast</keyword>
<keyword id="KW-0903">Direct protein sequencing</keyword>
<keyword id="KW-0418">Kinase</keyword>
<keyword id="KW-0460">Magnesium</keyword>
<keyword id="KW-0479">Metal-binding</keyword>
<keyword id="KW-0546">Nucleotide metabolism</keyword>
<keyword id="KW-0547">Nucleotide-binding</keyword>
<keyword id="KW-0597">Phosphoprotein</keyword>
<keyword id="KW-0934">Plastid</keyword>
<keyword id="KW-0808">Transferase</keyword>
<keyword id="KW-0809">Transit peptide</keyword>
<feature type="transit peptide" description="Chloroplast" evidence="2">
    <location>
        <begin position="1"/>
        <end position="64"/>
    </location>
</feature>
<feature type="chain" id="PRO_0000019437" description="Nucleoside diphosphate kinase 2 high molecular weight">
    <location>
        <begin position="65"/>
        <end position="230"/>
    </location>
</feature>
<feature type="chain" id="PRO_0000019438" description="Nucleoside diphosphate kinase 2 low molecular weight">
    <location>
        <begin position="78"/>
        <end position="230"/>
    </location>
</feature>
<feature type="active site" description="Pros-phosphohistidine intermediate" evidence="1">
    <location>
        <position position="196"/>
    </location>
</feature>
<feature type="binding site" evidence="1">
    <location>
        <position position="90"/>
    </location>
    <ligand>
        <name>ATP</name>
        <dbReference type="ChEBI" id="CHEBI:30616"/>
    </ligand>
</feature>
<feature type="binding site" evidence="1">
    <location>
        <position position="138"/>
    </location>
    <ligand>
        <name>ATP</name>
        <dbReference type="ChEBI" id="CHEBI:30616"/>
    </ligand>
</feature>
<feature type="binding site" evidence="1">
    <location>
        <position position="166"/>
    </location>
    <ligand>
        <name>ATP</name>
        <dbReference type="ChEBI" id="CHEBI:30616"/>
    </ligand>
</feature>
<feature type="binding site" evidence="1">
    <location>
        <position position="172"/>
    </location>
    <ligand>
        <name>ATP</name>
        <dbReference type="ChEBI" id="CHEBI:30616"/>
    </ligand>
</feature>
<feature type="binding site" evidence="1">
    <location>
        <position position="183"/>
    </location>
    <ligand>
        <name>ATP</name>
        <dbReference type="ChEBI" id="CHEBI:30616"/>
    </ligand>
</feature>
<feature type="binding site" evidence="1">
    <location>
        <position position="193"/>
    </location>
    <ligand>
        <name>ATP</name>
        <dbReference type="ChEBI" id="CHEBI:30616"/>
    </ligand>
</feature>
<comment type="function">
    <text>Major role in the synthesis of nucleoside triphosphates other than ATP. The ATP gamma phosphate is transferred to the NDP beta phosphate via a ping-pong mechanism, using a phosphorylated active-site intermediate.</text>
</comment>
<comment type="catalytic activity">
    <reaction>
        <text>a 2'-deoxyribonucleoside 5'-diphosphate + ATP = a 2'-deoxyribonucleoside 5'-triphosphate + ADP</text>
        <dbReference type="Rhea" id="RHEA:44640"/>
        <dbReference type="ChEBI" id="CHEBI:30616"/>
        <dbReference type="ChEBI" id="CHEBI:61560"/>
        <dbReference type="ChEBI" id="CHEBI:73316"/>
        <dbReference type="ChEBI" id="CHEBI:456216"/>
        <dbReference type="EC" id="2.7.4.6"/>
    </reaction>
</comment>
<comment type="catalytic activity">
    <reaction>
        <text>a ribonucleoside 5'-diphosphate + ATP = a ribonucleoside 5'-triphosphate + ADP</text>
        <dbReference type="Rhea" id="RHEA:18113"/>
        <dbReference type="ChEBI" id="CHEBI:30616"/>
        <dbReference type="ChEBI" id="CHEBI:57930"/>
        <dbReference type="ChEBI" id="CHEBI:61557"/>
        <dbReference type="ChEBI" id="CHEBI:456216"/>
        <dbReference type="EC" id="2.7.4.6"/>
    </reaction>
</comment>
<comment type="cofactor">
    <cofactor evidence="1">
        <name>Mg(2+)</name>
        <dbReference type="ChEBI" id="CHEBI:18420"/>
    </cofactor>
</comment>
<comment type="subcellular location">
    <subcellularLocation>
        <location evidence="3">Plastid</location>
        <location evidence="3">Chloroplast</location>
    </subcellularLocation>
</comment>
<comment type="similarity">
    <text evidence="3">Belongs to the NDK family.</text>
</comment>
<protein>
    <recommendedName>
        <fullName>Nucleoside diphosphate kinase 2, chloroplastic</fullName>
        <ecNumber>2.7.4.6</ecNumber>
    </recommendedName>
    <alternativeName>
        <fullName>Nucleoside diphosphate kinase II</fullName>
        <shortName>NDK II</shortName>
        <shortName>NDP kinase II</shortName>
        <shortName>NDPK II</shortName>
    </alternativeName>
    <component>
        <recommendedName>
            <fullName>Nucleoside diphosphate kinase 2 high molecular weight</fullName>
        </recommendedName>
    </component>
    <component>
        <recommendedName>
            <fullName>Nucleoside diphosphate kinase 2 low molecular weight</fullName>
        </recommendedName>
    </component>
</protein>
<reference key="1">
    <citation type="journal article" date="1995" name="Planta">
        <title>Nucleoside diphosphate kinase from pea chloroplasts: purification, cDNA cloning and import into chloroplasts.</title>
        <authorList>
            <person name="Luebeck J."/>
            <person name="Soll J."/>
        </authorList>
    </citation>
    <scope>NUCLEOTIDE SEQUENCE [MRNA]</scope>
    <scope>PROTEIN SEQUENCE OF 65-76 AND 78-107</scope>
    <source>
        <strain>cv. Golf</strain>
        <tissue>Leaf</tissue>
    </source>
</reference>
<gene>
    <name type="primary">NDPK2</name>
</gene>
<sequence length="230" mass="25617">MEAMAVFSGSNLFATSSLLLTTNSKTRYSQLRTTQNLSAFSSKSHLFSPSSTSSSYPKTFRTRSSTESGIFLPRLITSLEQVDQAYIMVKPDGVQRGLVGEIISRFEKKGFKLTGLKLFQCSKELAEEHYKHLNQKSFFPKLIEYITSGPVVSMAWEGVGVVPSARKLIGATDPLQAEPGTIRGDFAVQTGRNIIHGSDSPENGEREIALWFKEGELCEWTPVQEPWLRE</sequence>
<evidence type="ECO:0000250" key="1"/>
<evidence type="ECO:0000269" key="2">
    <source>
    </source>
</evidence>
<evidence type="ECO:0000305" key="3"/>
<proteinExistence type="evidence at protein level"/>
<name>NDK2_PEA</name>